<organism>
    <name type="scientific">Xanthomonas axonopodis pv. citri (strain 306)</name>
    <dbReference type="NCBI Taxonomy" id="190486"/>
    <lineage>
        <taxon>Bacteria</taxon>
        <taxon>Pseudomonadati</taxon>
        <taxon>Pseudomonadota</taxon>
        <taxon>Gammaproteobacteria</taxon>
        <taxon>Lysobacterales</taxon>
        <taxon>Lysobacteraceae</taxon>
        <taxon>Xanthomonas</taxon>
    </lineage>
</organism>
<name>AROC_XANAC</name>
<reference key="1">
    <citation type="journal article" date="2002" name="Nature">
        <title>Comparison of the genomes of two Xanthomonas pathogens with differing host specificities.</title>
        <authorList>
            <person name="da Silva A.C.R."/>
            <person name="Ferro J.A."/>
            <person name="Reinach F.C."/>
            <person name="Farah C.S."/>
            <person name="Furlan L.R."/>
            <person name="Quaggio R.B."/>
            <person name="Monteiro-Vitorello C.B."/>
            <person name="Van Sluys M.A."/>
            <person name="Almeida N.F. Jr."/>
            <person name="Alves L.M.C."/>
            <person name="do Amaral A.M."/>
            <person name="Bertolini M.C."/>
            <person name="Camargo L.E.A."/>
            <person name="Camarotte G."/>
            <person name="Cannavan F."/>
            <person name="Cardozo J."/>
            <person name="Chambergo F."/>
            <person name="Ciapina L.P."/>
            <person name="Cicarelli R.M.B."/>
            <person name="Coutinho L.L."/>
            <person name="Cursino-Santos J.R."/>
            <person name="El-Dorry H."/>
            <person name="Faria J.B."/>
            <person name="Ferreira A.J.S."/>
            <person name="Ferreira R.C.C."/>
            <person name="Ferro M.I.T."/>
            <person name="Formighieri E.F."/>
            <person name="Franco M.C."/>
            <person name="Greggio C.C."/>
            <person name="Gruber A."/>
            <person name="Katsuyama A.M."/>
            <person name="Kishi L.T."/>
            <person name="Leite R.P."/>
            <person name="Lemos E.G.M."/>
            <person name="Lemos M.V.F."/>
            <person name="Locali E.C."/>
            <person name="Machado M.A."/>
            <person name="Madeira A.M.B.N."/>
            <person name="Martinez-Rossi N.M."/>
            <person name="Martins E.C."/>
            <person name="Meidanis J."/>
            <person name="Menck C.F.M."/>
            <person name="Miyaki C.Y."/>
            <person name="Moon D.H."/>
            <person name="Moreira L.M."/>
            <person name="Novo M.T.M."/>
            <person name="Okura V.K."/>
            <person name="Oliveira M.C."/>
            <person name="Oliveira V.R."/>
            <person name="Pereira H.A."/>
            <person name="Rossi A."/>
            <person name="Sena J.A.D."/>
            <person name="Silva C."/>
            <person name="de Souza R.F."/>
            <person name="Spinola L.A.F."/>
            <person name="Takita M.A."/>
            <person name="Tamura R.E."/>
            <person name="Teixeira E.C."/>
            <person name="Tezza R.I.D."/>
            <person name="Trindade dos Santos M."/>
            <person name="Truffi D."/>
            <person name="Tsai S.M."/>
            <person name="White F.F."/>
            <person name="Setubal J.C."/>
            <person name="Kitajima J.P."/>
        </authorList>
    </citation>
    <scope>NUCLEOTIDE SEQUENCE [LARGE SCALE GENOMIC DNA]</scope>
    <source>
        <strain>306</strain>
    </source>
</reference>
<gene>
    <name evidence="1" type="primary">aroC</name>
    <name type="ordered locus">XAC2725</name>
</gene>
<protein>
    <recommendedName>
        <fullName evidence="1">Chorismate synthase</fullName>
        <shortName evidence="1">CS</shortName>
        <ecNumber evidence="1">4.2.3.5</ecNumber>
    </recommendedName>
    <alternativeName>
        <fullName evidence="1">5-enolpyruvylshikimate-3-phosphate phospholyase</fullName>
    </alternativeName>
</protein>
<keyword id="KW-0028">Amino-acid biosynthesis</keyword>
<keyword id="KW-0057">Aromatic amino acid biosynthesis</keyword>
<keyword id="KW-0274">FAD</keyword>
<keyword id="KW-0285">Flavoprotein</keyword>
<keyword id="KW-0288">FMN</keyword>
<keyword id="KW-0456">Lyase</keyword>
<keyword id="KW-0521">NADP</keyword>
<comment type="function">
    <text evidence="1">Catalyzes the anti-1,4-elimination of the C-3 phosphate and the C-6 proR hydrogen from 5-enolpyruvylshikimate-3-phosphate (EPSP) to yield chorismate, which is the branch point compound that serves as the starting substrate for the three terminal pathways of aromatic amino acid biosynthesis. This reaction introduces a second double bond into the aromatic ring system.</text>
</comment>
<comment type="catalytic activity">
    <reaction evidence="1">
        <text>5-O-(1-carboxyvinyl)-3-phosphoshikimate = chorismate + phosphate</text>
        <dbReference type="Rhea" id="RHEA:21020"/>
        <dbReference type="ChEBI" id="CHEBI:29748"/>
        <dbReference type="ChEBI" id="CHEBI:43474"/>
        <dbReference type="ChEBI" id="CHEBI:57701"/>
        <dbReference type="EC" id="4.2.3.5"/>
    </reaction>
</comment>
<comment type="cofactor">
    <cofactor evidence="1">
        <name>FMNH2</name>
        <dbReference type="ChEBI" id="CHEBI:57618"/>
    </cofactor>
    <text evidence="1">Reduced FMN (FMNH(2)).</text>
</comment>
<comment type="pathway">
    <text evidence="1">Metabolic intermediate biosynthesis; chorismate biosynthesis; chorismate from D-erythrose 4-phosphate and phosphoenolpyruvate: step 7/7.</text>
</comment>
<comment type="subunit">
    <text evidence="1">Homotetramer.</text>
</comment>
<comment type="similarity">
    <text evidence="1">Belongs to the chorismate synthase family.</text>
</comment>
<dbReference type="EC" id="4.2.3.5" evidence="1"/>
<dbReference type="EMBL" id="AE008923">
    <property type="protein sequence ID" value="AAM37570.1"/>
    <property type="molecule type" value="Genomic_DNA"/>
</dbReference>
<dbReference type="RefSeq" id="WP_011051786.1">
    <property type="nucleotide sequence ID" value="NC_003919.1"/>
</dbReference>
<dbReference type="SMR" id="Q8PJ20"/>
<dbReference type="GeneID" id="66911815"/>
<dbReference type="KEGG" id="xac:XAC2725"/>
<dbReference type="eggNOG" id="COG0082">
    <property type="taxonomic scope" value="Bacteria"/>
</dbReference>
<dbReference type="HOGENOM" id="CLU_034547_0_2_6"/>
<dbReference type="UniPathway" id="UPA00053">
    <property type="reaction ID" value="UER00090"/>
</dbReference>
<dbReference type="Proteomes" id="UP000000576">
    <property type="component" value="Chromosome"/>
</dbReference>
<dbReference type="GO" id="GO:0005829">
    <property type="term" value="C:cytosol"/>
    <property type="evidence" value="ECO:0007669"/>
    <property type="project" value="TreeGrafter"/>
</dbReference>
<dbReference type="GO" id="GO:0004107">
    <property type="term" value="F:chorismate synthase activity"/>
    <property type="evidence" value="ECO:0007669"/>
    <property type="project" value="UniProtKB-UniRule"/>
</dbReference>
<dbReference type="GO" id="GO:0010181">
    <property type="term" value="F:FMN binding"/>
    <property type="evidence" value="ECO:0007669"/>
    <property type="project" value="TreeGrafter"/>
</dbReference>
<dbReference type="GO" id="GO:0008652">
    <property type="term" value="P:amino acid biosynthetic process"/>
    <property type="evidence" value="ECO:0007669"/>
    <property type="project" value="UniProtKB-KW"/>
</dbReference>
<dbReference type="GO" id="GO:0009073">
    <property type="term" value="P:aromatic amino acid family biosynthetic process"/>
    <property type="evidence" value="ECO:0007669"/>
    <property type="project" value="UniProtKB-KW"/>
</dbReference>
<dbReference type="GO" id="GO:0009423">
    <property type="term" value="P:chorismate biosynthetic process"/>
    <property type="evidence" value="ECO:0007669"/>
    <property type="project" value="UniProtKB-UniRule"/>
</dbReference>
<dbReference type="CDD" id="cd07304">
    <property type="entry name" value="Chorismate_synthase"/>
    <property type="match status" value="1"/>
</dbReference>
<dbReference type="FunFam" id="3.60.150.10:FF:000001">
    <property type="entry name" value="Chorismate synthase"/>
    <property type="match status" value="1"/>
</dbReference>
<dbReference type="Gene3D" id="3.60.150.10">
    <property type="entry name" value="Chorismate synthase AroC"/>
    <property type="match status" value="1"/>
</dbReference>
<dbReference type="HAMAP" id="MF_00300">
    <property type="entry name" value="Chorismate_synth"/>
    <property type="match status" value="1"/>
</dbReference>
<dbReference type="InterPro" id="IPR000453">
    <property type="entry name" value="Chorismate_synth"/>
</dbReference>
<dbReference type="InterPro" id="IPR035904">
    <property type="entry name" value="Chorismate_synth_AroC_sf"/>
</dbReference>
<dbReference type="InterPro" id="IPR020541">
    <property type="entry name" value="Chorismate_synthase_CS"/>
</dbReference>
<dbReference type="NCBIfam" id="TIGR00033">
    <property type="entry name" value="aroC"/>
    <property type="match status" value="1"/>
</dbReference>
<dbReference type="NCBIfam" id="NF003793">
    <property type="entry name" value="PRK05382.1"/>
    <property type="match status" value="1"/>
</dbReference>
<dbReference type="PANTHER" id="PTHR21085">
    <property type="entry name" value="CHORISMATE SYNTHASE"/>
    <property type="match status" value="1"/>
</dbReference>
<dbReference type="PANTHER" id="PTHR21085:SF0">
    <property type="entry name" value="CHORISMATE SYNTHASE"/>
    <property type="match status" value="1"/>
</dbReference>
<dbReference type="Pfam" id="PF01264">
    <property type="entry name" value="Chorismate_synt"/>
    <property type="match status" value="1"/>
</dbReference>
<dbReference type="PIRSF" id="PIRSF001456">
    <property type="entry name" value="Chorismate_synth"/>
    <property type="match status" value="1"/>
</dbReference>
<dbReference type="SUPFAM" id="SSF103263">
    <property type="entry name" value="Chorismate synthase, AroC"/>
    <property type="match status" value="1"/>
</dbReference>
<dbReference type="PROSITE" id="PS00787">
    <property type="entry name" value="CHORISMATE_SYNTHASE_1"/>
    <property type="match status" value="1"/>
</dbReference>
<dbReference type="PROSITE" id="PS00788">
    <property type="entry name" value="CHORISMATE_SYNTHASE_2"/>
    <property type="match status" value="1"/>
</dbReference>
<dbReference type="PROSITE" id="PS00789">
    <property type="entry name" value="CHORISMATE_SYNTHASE_3"/>
    <property type="match status" value="1"/>
</dbReference>
<sequence length="367" mass="39139">MSANSFGKLFTVTTFGESHGPAIGCVVDGCPPGLEIAPEEFTHDLQRRASGKSRHTSARREADEIEILSGVYEGRTTGTPIGLLIRNTDQRSKDYSNIAQQFRPGHADYTYWQKYGIRDPRGGGRSSARETTMRVAAGVIAKKWLKQRYGVLVRGFLSQLGEIRPAGFDWDAVEDNPFFWPHAAQVPELETYMDALRKSGDSVGARVDVVAGGVPAGWGEPIYGKLDAELAAALMSINAVKGVEIGDGFASAAQRGTEHRDLITPEGFLSNHAGGILGGISTGQAVTASMVLKPTSSLRLPGATVDADGSVVDVITTGRHDPCVGIRATPIAEAMMALVLMDQALRHRAQCGDVGEVSPRIPGQVDV</sequence>
<feature type="chain" id="PRO_0000140678" description="Chorismate synthase">
    <location>
        <begin position="1"/>
        <end position="367"/>
    </location>
</feature>
<feature type="region of interest" description="Disordered" evidence="2">
    <location>
        <begin position="41"/>
        <end position="60"/>
    </location>
</feature>
<feature type="binding site" evidence="1">
    <location>
        <position position="48"/>
    </location>
    <ligand>
        <name>NADP(+)</name>
        <dbReference type="ChEBI" id="CHEBI:58349"/>
    </ligand>
</feature>
<feature type="binding site" evidence="1">
    <location>
        <position position="54"/>
    </location>
    <ligand>
        <name>NADP(+)</name>
        <dbReference type="ChEBI" id="CHEBI:58349"/>
    </ligand>
</feature>
<feature type="binding site" evidence="1">
    <location>
        <begin position="125"/>
        <end position="127"/>
    </location>
    <ligand>
        <name>FMN</name>
        <dbReference type="ChEBI" id="CHEBI:58210"/>
    </ligand>
</feature>
<feature type="binding site" evidence="1">
    <location>
        <begin position="238"/>
        <end position="239"/>
    </location>
    <ligand>
        <name>FMN</name>
        <dbReference type="ChEBI" id="CHEBI:58210"/>
    </ligand>
</feature>
<feature type="binding site" evidence="1">
    <location>
        <position position="278"/>
    </location>
    <ligand>
        <name>FMN</name>
        <dbReference type="ChEBI" id="CHEBI:58210"/>
    </ligand>
</feature>
<feature type="binding site" evidence="1">
    <location>
        <begin position="293"/>
        <end position="297"/>
    </location>
    <ligand>
        <name>FMN</name>
        <dbReference type="ChEBI" id="CHEBI:58210"/>
    </ligand>
</feature>
<feature type="binding site" evidence="1">
    <location>
        <position position="319"/>
    </location>
    <ligand>
        <name>FMN</name>
        <dbReference type="ChEBI" id="CHEBI:58210"/>
    </ligand>
</feature>
<proteinExistence type="inferred from homology"/>
<evidence type="ECO:0000255" key="1">
    <source>
        <dbReference type="HAMAP-Rule" id="MF_00300"/>
    </source>
</evidence>
<evidence type="ECO:0000256" key="2">
    <source>
        <dbReference type="SAM" id="MobiDB-lite"/>
    </source>
</evidence>
<accession>Q8PJ20</accession>